<organism>
    <name type="scientific">Desulfotalea psychrophila (strain LSv54 / DSM 12343)</name>
    <dbReference type="NCBI Taxonomy" id="177439"/>
    <lineage>
        <taxon>Bacteria</taxon>
        <taxon>Pseudomonadati</taxon>
        <taxon>Thermodesulfobacteriota</taxon>
        <taxon>Desulfobulbia</taxon>
        <taxon>Desulfobulbales</taxon>
        <taxon>Desulfocapsaceae</taxon>
        <taxon>Desulfotalea</taxon>
    </lineage>
</organism>
<feature type="chain" id="PRO_0000229235" description="Ribosome maturation factor RimP">
    <location>
        <begin position="1"/>
        <end position="151"/>
    </location>
</feature>
<keyword id="KW-0963">Cytoplasm</keyword>
<keyword id="KW-1185">Reference proteome</keyword>
<keyword id="KW-0690">Ribosome biogenesis</keyword>
<sequence length="151" mass="16638">MSEAAVEKIEGYVASVLQSMDVELVDIQFRCEGHGWVLRLFIDVEGGVTLDLCAQVSREVGQYLDVEDVIEQAYHLEVSSPGVERPLKSLANFERFAGKKARIKLHEPLNGEKTFEGIIGPVEDGEVSLLVDGKIAVKCGIEQLNKARLVL</sequence>
<proteinExistence type="inferred from homology"/>
<name>RIMP_DESPS</name>
<accession>Q6AJY2</accession>
<gene>
    <name evidence="1" type="primary">rimP</name>
    <name type="ordered locus">DP2615</name>
</gene>
<evidence type="ECO:0000255" key="1">
    <source>
        <dbReference type="HAMAP-Rule" id="MF_01077"/>
    </source>
</evidence>
<protein>
    <recommendedName>
        <fullName evidence="1">Ribosome maturation factor RimP</fullName>
    </recommendedName>
</protein>
<dbReference type="EMBL" id="CR522870">
    <property type="protein sequence ID" value="CAG37344.1"/>
    <property type="molecule type" value="Genomic_DNA"/>
</dbReference>
<dbReference type="RefSeq" id="WP_011189856.1">
    <property type="nucleotide sequence ID" value="NC_006138.1"/>
</dbReference>
<dbReference type="SMR" id="Q6AJY2"/>
<dbReference type="STRING" id="177439.DP2615"/>
<dbReference type="KEGG" id="dps:DP2615"/>
<dbReference type="eggNOG" id="COG0779">
    <property type="taxonomic scope" value="Bacteria"/>
</dbReference>
<dbReference type="HOGENOM" id="CLU_070525_2_2_7"/>
<dbReference type="OrthoDB" id="9805006at2"/>
<dbReference type="Proteomes" id="UP000000602">
    <property type="component" value="Chromosome"/>
</dbReference>
<dbReference type="GO" id="GO:0005829">
    <property type="term" value="C:cytosol"/>
    <property type="evidence" value="ECO:0007669"/>
    <property type="project" value="TreeGrafter"/>
</dbReference>
<dbReference type="GO" id="GO:0000028">
    <property type="term" value="P:ribosomal small subunit assembly"/>
    <property type="evidence" value="ECO:0007669"/>
    <property type="project" value="TreeGrafter"/>
</dbReference>
<dbReference type="GO" id="GO:0006412">
    <property type="term" value="P:translation"/>
    <property type="evidence" value="ECO:0007669"/>
    <property type="project" value="TreeGrafter"/>
</dbReference>
<dbReference type="CDD" id="cd01734">
    <property type="entry name" value="YlxS_C"/>
    <property type="match status" value="1"/>
</dbReference>
<dbReference type="FunFam" id="3.30.300.70:FF:000001">
    <property type="entry name" value="Ribosome maturation factor RimP"/>
    <property type="match status" value="1"/>
</dbReference>
<dbReference type="Gene3D" id="2.30.30.180">
    <property type="entry name" value="Ribosome maturation factor RimP, C-terminal domain"/>
    <property type="match status" value="1"/>
</dbReference>
<dbReference type="Gene3D" id="3.30.300.70">
    <property type="entry name" value="RimP-like superfamily, N-terminal"/>
    <property type="match status" value="1"/>
</dbReference>
<dbReference type="HAMAP" id="MF_01077">
    <property type="entry name" value="RimP"/>
    <property type="match status" value="1"/>
</dbReference>
<dbReference type="InterPro" id="IPR003728">
    <property type="entry name" value="Ribosome_maturation_RimP"/>
</dbReference>
<dbReference type="InterPro" id="IPR028998">
    <property type="entry name" value="RimP_C"/>
</dbReference>
<dbReference type="InterPro" id="IPR036847">
    <property type="entry name" value="RimP_C_sf"/>
</dbReference>
<dbReference type="InterPro" id="IPR028989">
    <property type="entry name" value="RimP_N"/>
</dbReference>
<dbReference type="InterPro" id="IPR035956">
    <property type="entry name" value="RimP_N_sf"/>
</dbReference>
<dbReference type="PANTHER" id="PTHR33867">
    <property type="entry name" value="RIBOSOME MATURATION FACTOR RIMP"/>
    <property type="match status" value="1"/>
</dbReference>
<dbReference type="PANTHER" id="PTHR33867:SF1">
    <property type="entry name" value="RIBOSOME MATURATION FACTOR RIMP"/>
    <property type="match status" value="1"/>
</dbReference>
<dbReference type="Pfam" id="PF17384">
    <property type="entry name" value="DUF150_C"/>
    <property type="match status" value="1"/>
</dbReference>
<dbReference type="Pfam" id="PF02576">
    <property type="entry name" value="RimP_N"/>
    <property type="match status" value="1"/>
</dbReference>
<dbReference type="SUPFAM" id="SSF74942">
    <property type="entry name" value="YhbC-like, C-terminal domain"/>
    <property type="match status" value="1"/>
</dbReference>
<dbReference type="SUPFAM" id="SSF75420">
    <property type="entry name" value="YhbC-like, N-terminal domain"/>
    <property type="match status" value="1"/>
</dbReference>
<comment type="function">
    <text evidence="1">Required for maturation of 30S ribosomal subunits.</text>
</comment>
<comment type="subcellular location">
    <subcellularLocation>
        <location evidence="1">Cytoplasm</location>
    </subcellularLocation>
</comment>
<comment type="similarity">
    <text evidence="1">Belongs to the RimP family.</text>
</comment>
<reference key="1">
    <citation type="journal article" date="2004" name="Environ. Microbiol.">
        <title>The genome of Desulfotalea psychrophila, a sulfate-reducing bacterium from permanently cold Arctic sediments.</title>
        <authorList>
            <person name="Rabus R."/>
            <person name="Ruepp A."/>
            <person name="Frickey T."/>
            <person name="Rattei T."/>
            <person name="Fartmann B."/>
            <person name="Stark M."/>
            <person name="Bauer M."/>
            <person name="Zibat A."/>
            <person name="Lombardot T."/>
            <person name="Becker I."/>
            <person name="Amann J."/>
            <person name="Gellner K."/>
            <person name="Teeling H."/>
            <person name="Leuschner W.D."/>
            <person name="Gloeckner F.-O."/>
            <person name="Lupas A.N."/>
            <person name="Amann R."/>
            <person name="Klenk H.-P."/>
        </authorList>
    </citation>
    <scope>NUCLEOTIDE SEQUENCE [LARGE SCALE GENOMIC DNA]</scope>
    <source>
        <strain>DSM 12343 / LSv54</strain>
    </source>
</reference>